<gene>
    <name type="primary">CDH19</name>
    <name type="synonym">CDH7L2</name>
    <name type="ORF">UNQ478/PRO941</name>
</gene>
<organism>
    <name type="scientific">Homo sapiens</name>
    <name type="common">Human</name>
    <dbReference type="NCBI Taxonomy" id="9606"/>
    <lineage>
        <taxon>Eukaryota</taxon>
        <taxon>Metazoa</taxon>
        <taxon>Chordata</taxon>
        <taxon>Craniata</taxon>
        <taxon>Vertebrata</taxon>
        <taxon>Euteleostomi</taxon>
        <taxon>Mammalia</taxon>
        <taxon>Eutheria</taxon>
        <taxon>Euarchontoglires</taxon>
        <taxon>Primates</taxon>
        <taxon>Haplorrhini</taxon>
        <taxon>Catarrhini</taxon>
        <taxon>Hominidae</taxon>
        <taxon>Homo</taxon>
    </lineage>
</organism>
<comment type="function">
    <text>Cadherins are calcium-dependent cell adhesion proteins. They preferentially interact with themselves in a homophilic manner in connecting cells; cadherins may thus contribute to the sorting of heterogeneous cell types.</text>
</comment>
<comment type="subcellular location">
    <subcellularLocation>
        <location>Cell membrane</location>
        <topology>Single-pass type I membrane protein</topology>
    </subcellularLocation>
</comment>
<comment type="alternative products">
    <event type="alternative splicing"/>
    <isoform>
        <id>Q9H159-1</id>
        <name>1</name>
        <sequence type="displayed"/>
    </isoform>
    <isoform>
        <id>Q9H159-2</id>
        <name>2</name>
        <sequence type="described" ref="VSP_047020 VSP_047021"/>
    </isoform>
</comment>
<comment type="tissue specificity">
    <text>Expressed in many tissues, with the exception of uterus.</text>
</comment>
<comment type="domain">
    <text evidence="1">Three calcium ions are usually bound at the interface of each cadherin domain and rigidify the connections, imparting a strong curvature to the full-length ectodomain.</text>
</comment>
<keyword id="KW-0025">Alternative splicing</keyword>
<keyword id="KW-0106">Calcium</keyword>
<keyword id="KW-0130">Cell adhesion</keyword>
<keyword id="KW-1003">Cell membrane</keyword>
<keyword id="KW-0165">Cleavage on pair of basic residues</keyword>
<keyword id="KW-0325">Glycoprotein</keyword>
<keyword id="KW-0472">Membrane</keyword>
<keyword id="KW-0479">Metal-binding</keyword>
<keyword id="KW-1267">Proteomics identification</keyword>
<keyword id="KW-1185">Reference proteome</keyword>
<keyword id="KW-0677">Repeat</keyword>
<keyword id="KW-0732">Signal</keyword>
<keyword id="KW-0812">Transmembrane</keyword>
<keyword id="KW-1133">Transmembrane helix</keyword>
<reference key="1">
    <citation type="journal article" date="2000" name="Genomics">
        <title>Characterization of three novel human cadherin genes (CDH7, CDH19, and CDH20) clustered on chromosome 18q22-q23 and with high homology to chicken cadherin-7.</title>
        <authorList>
            <person name="Kools P."/>
            <person name="Van Imschoot G."/>
            <person name="van Roy F."/>
        </authorList>
    </citation>
    <scope>NUCLEOTIDE SEQUENCE [MRNA] (ISOFORM 1)</scope>
</reference>
<reference key="2">
    <citation type="journal article" date="2003" name="Genome Res.">
        <title>The secreted protein discovery initiative (SPDI), a large-scale effort to identify novel human secreted and transmembrane proteins: a bioinformatics assessment.</title>
        <authorList>
            <person name="Clark H.F."/>
            <person name="Gurney A.L."/>
            <person name="Abaya E."/>
            <person name="Baker K."/>
            <person name="Baldwin D.T."/>
            <person name="Brush J."/>
            <person name="Chen J."/>
            <person name="Chow B."/>
            <person name="Chui C."/>
            <person name="Crowley C."/>
            <person name="Currell B."/>
            <person name="Deuel B."/>
            <person name="Dowd P."/>
            <person name="Eaton D."/>
            <person name="Foster J.S."/>
            <person name="Grimaldi C."/>
            <person name="Gu Q."/>
            <person name="Hass P.E."/>
            <person name="Heldens S."/>
            <person name="Huang A."/>
            <person name="Kim H.S."/>
            <person name="Klimowski L."/>
            <person name="Jin Y."/>
            <person name="Johnson S."/>
            <person name="Lee J."/>
            <person name="Lewis L."/>
            <person name="Liao D."/>
            <person name="Mark M.R."/>
            <person name="Robbie E."/>
            <person name="Sanchez C."/>
            <person name="Schoenfeld J."/>
            <person name="Seshagiri S."/>
            <person name="Simmons L."/>
            <person name="Singh J."/>
            <person name="Smith V."/>
            <person name="Stinson J."/>
            <person name="Vagts A."/>
            <person name="Vandlen R.L."/>
            <person name="Watanabe C."/>
            <person name="Wieand D."/>
            <person name="Woods K."/>
            <person name="Xie M.-H."/>
            <person name="Yansura D.G."/>
            <person name="Yi S."/>
            <person name="Yu G."/>
            <person name="Yuan J."/>
            <person name="Zhang M."/>
            <person name="Zhang Z."/>
            <person name="Goddard A.D."/>
            <person name="Wood W.I."/>
            <person name="Godowski P.J."/>
            <person name="Gray A.M."/>
        </authorList>
    </citation>
    <scope>NUCLEOTIDE SEQUENCE [LARGE SCALE MRNA] (ISOFORM 1)</scope>
</reference>
<reference key="3">
    <citation type="journal article" date="2004" name="Nat. Genet.">
        <title>Complete sequencing and characterization of 21,243 full-length human cDNAs.</title>
        <authorList>
            <person name="Ota T."/>
            <person name="Suzuki Y."/>
            <person name="Nishikawa T."/>
            <person name="Otsuki T."/>
            <person name="Sugiyama T."/>
            <person name="Irie R."/>
            <person name="Wakamatsu A."/>
            <person name="Hayashi K."/>
            <person name="Sato H."/>
            <person name="Nagai K."/>
            <person name="Kimura K."/>
            <person name="Makita H."/>
            <person name="Sekine M."/>
            <person name="Obayashi M."/>
            <person name="Nishi T."/>
            <person name="Shibahara T."/>
            <person name="Tanaka T."/>
            <person name="Ishii S."/>
            <person name="Yamamoto J."/>
            <person name="Saito K."/>
            <person name="Kawai Y."/>
            <person name="Isono Y."/>
            <person name="Nakamura Y."/>
            <person name="Nagahari K."/>
            <person name="Murakami K."/>
            <person name="Yasuda T."/>
            <person name="Iwayanagi T."/>
            <person name="Wagatsuma M."/>
            <person name="Shiratori A."/>
            <person name="Sudo H."/>
            <person name="Hosoiri T."/>
            <person name="Kaku Y."/>
            <person name="Kodaira H."/>
            <person name="Kondo H."/>
            <person name="Sugawara M."/>
            <person name="Takahashi M."/>
            <person name="Kanda K."/>
            <person name="Yokoi T."/>
            <person name="Furuya T."/>
            <person name="Kikkawa E."/>
            <person name="Omura Y."/>
            <person name="Abe K."/>
            <person name="Kamihara K."/>
            <person name="Katsuta N."/>
            <person name="Sato K."/>
            <person name="Tanikawa M."/>
            <person name="Yamazaki M."/>
            <person name="Ninomiya K."/>
            <person name="Ishibashi T."/>
            <person name="Yamashita H."/>
            <person name="Murakawa K."/>
            <person name="Fujimori K."/>
            <person name="Tanai H."/>
            <person name="Kimata M."/>
            <person name="Watanabe M."/>
            <person name="Hiraoka S."/>
            <person name="Chiba Y."/>
            <person name="Ishida S."/>
            <person name="Ono Y."/>
            <person name="Takiguchi S."/>
            <person name="Watanabe S."/>
            <person name="Yosida M."/>
            <person name="Hotuta T."/>
            <person name="Kusano J."/>
            <person name="Kanehori K."/>
            <person name="Takahashi-Fujii A."/>
            <person name="Hara H."/>
            <person name="Tanase T.-O."/>
            <person name="Nomura Y."/>
            <person name="Togiya S."/>
            <person name="Komai F."/>
            <person name="Hara R."/>
            <person name="Takeuchi K."/>
            <person name="Arita M."/>
            <person name="Imose N."/>
            <person name="Musashino K."/>
            <person name="Yuuki H."/>
            <person name="Oshima A."/>
            <person name="Sasaki N."/>
            <person name="Aotsuka S."/>
            <person name="Yoshikawa Y."/>
            <person name="Matsunawa H."/>
            <person name="Ichihara T."/>
            <person name="Shiohata N."/>
            <person name="Sano S."/>
            <person name="Moriya S."/>
            <person name="Momiyama H."/>
            <person name="Satoh N."/>
            <person name="Takami S."/>
            <person name="Terashima Y."/>
            <person name="Suzuki O."/>
            <person name="Nakagawa S."/>
            <person name="Senoh A."/>
            <person name="Mizoguchi H."/>
            <person name="Goto Y."/>
            <person name="Shimizu F."/>
            <person name="Wakebe H."/>
            <person name="Hishigaki H."/>
            <person name="Watanabe T."/>
            <person name="Sugiyama A."/>
            <person name="Takemoto M."/>
            <person name="Kawakami B."/>
            <person name="Yamazaki M."/>
            <person name="Watanabe K."/>
            <person name="Kumagai A."/>
            <person name="Itakura S."/>
            <person name="Fukuzumi Y."/>
            <person name="Fujimori Y."/>
            <person name="Komiyama M."/>
            <person name="Tashiro H."/>
            <person name="Tanigami A."/>
            <person name="Fujiwara T."/>
            <person name="Ono T."/>
            <person name="Yamada K."/>
            <person name="Fujii Y."/>
            <person name="Ozaki K."/>
            <person name="Hirao M."/>
            <person name="Ohmori Y."/>
            <person name="Kawabata A."/>
            <person name="Hikiji T."/>
            <person name="Kobatake N."/>
            <person name="Inagaki H."/>
            <person name="Ikema Y."/>
            <person name="Okamoto S."/>
            <person name="Okitani R."/>
            <person name="Kawakami T."/>
            <person name="Noguchi S."/>
            <person name="Itoh T."/>
            <person name="Shigeta K."/>
            <person name="Senba T."/>
            <person name="Matsumura K."/>
            <person name="Nakajima Y."/>
            <person name="Mizuno T."/>
            <person name="Morinaga M."/>
            <person name="Sasaki M."/>
            <person name="Togashi T."/>
            <person name="Oyama M."/>
            <person name="Hata H."/>
            <person name="Watanabe M."/>
            <person name="Komatsu T."/>
            <person name="Mizushima-Sugano J."/>
            <person name="Satoh T."/>
            <person name="Shirai Y."/>
            <person name="Takahashi Y."/>
            <person name="Nakagawa K."/>
            <person name="Okumura K."/>
            <person name="Nagase T."/>
            <person name="Nomura N."/>
            <person name="Kikuchi H."/>
            <person name="Masuho Y."/>
            <person name="Yamashita R."/>
            <person name="Nakai K."/>
            <person name="Yada T."/>
            <person name="Nakamura Y."/>
            <person name="Ohara O."/>
            <person name="Isogai T."/>
            <person name="Sugano S."/>
        </authorList>
    </citation>
    <scope>NUCLEOTIDE SEQUENCE [LARGE SCALE MRNA] (ISOFORM 2)</scope>
    <source>
        <tissue>Trachea</tissue>
    </source>
</reference>
<reference key="4">
    <citation type="journal article" date="2005" name="Nature">
        <title>DNA sequence and analysis of human chromosome 18.</title>
        <authorList>
            <person name="Nusbaum C."/>
            <person name="Zody M.C."/>
            <person name="Borowsky M.L."/>
            <person name="Kamal M."/>
            <person name="Kodira C.D."/>
            <person name="Taylor T.D."/>
            <person name="Whittaker C.A."/>
            <person name="Chang J.L."/>
            <person name="Cuomo C.A."/>
            <person name="Dewar K."/>
            <person name="FitzGerald M.G."/>
            <person name="Yang X."/>
            <person name="Abouelleil A."/>
            <person name="Allen N.R."/>
            <person name="Anderson S."/>
            <person name="Bloom T."/>
            <person name="Bugalter B."/>
            <person name="Butler J."/>
            <person name="Cook A."/>
            <person name="DeCaprio D."/>
            <person name="Engels R."/>
            <person name="Garber M."/>
            <person name="Gnirke A."/>
            <person name="Hafez N."/>
            <person name="Hall J.L."/>
            <person name="Norman C.H."/>
            <person name="Itoh T."/>
            <person name="Jaffe D.B."/>
            <person name="Kuroki Y."/>
            <person name="Lehoczky J."/>
            <person name="Lui A."/>
            <person name="Macdonald P."/>
            <person name="Mauceli E."/>
            <person name="Mikkelsen T.S."/>
            <person name="Naylor J.W."/>
            <person name="Nicol R."/>
            <person name="Nguyen C."/>
            <person name="Noguchi H."/>
            <person name="O'Leary S.B."/>
            <person name="Piqani B."/>
            <person name="Smith C.L."/>
            <person name="Talamas J.A."/>
            <person name="Topham K."/>
            <person name="Totoki Y."/>
            <person name="Toyoda A."/>
            <person name="Wain H.M."/>
            <person name="Young S.K."/>
            <person name="Zeng Q."/>
            <person name="Zimmer A.R."/>
            <person name="Fujiyama A."/>
            <person name="Hattori M."/>
            <person name="Birren B.W."/>
            <person name="Sakaki Y."/>
            <person name="Lander E.S."/>
        </authorList>
    </citation>
    <scope>NUCLEOTIDE SEQUENCE [LARGE SCALE GENOMIC DNA]</scope>
</reference>
<feature type="signal peptide" evidence="2">
    <location>
        <begin position="1"/>
        <end position="21"/>
    </location>
</feature>
<feature type="propeptide" id="PRO_0000003817" evidence="2">
    <location>
        <begin position="22"/>
        <end position="43"/>
    </location>
</feature>
<feature type="chain" id="PRO_0000003818" description="Cadherin-19">
    <location>
        <begin position="44"/>
        <end position="772"/>
    </location>
</feature>
<feature type="topological domain" description="Extracellular" evidence="2">
    <location>
        <begin position="44"/>
        <end position="596"/>
    </location>
</feature>
<feature type="transmembrane region" description="Helical" evidence="2">
    <location>
        <begin position="597"/>
        <end position="617"/>
    </location>
</feature>
<feature type="topological domain" description="Cytoplasmic" evidence="2">
    <location>
        <begin position="618"/>
        <end position="772"/>
    </location>
</feature>
<feature type="domain" description="Cadherin 1" evidence="3">
    <location>
        <begin position="44"/>
        <end position="148"/>
    </location>
</feature>
<feature type="domain" description="Cadherin 2" evidence="3">
    <location>
        <begin position="149"/>
        <end position="256"/>
    </location>
</feature>
<feature type="domain" description="Cadherin 3" evidence="3">
    <location>
        <begin position="257"/>
        <end position="370"/>
    </location>
</feature>
<feature type="domain" description="Cadherin 4" evidence="3">
    <location>
        <begin position="371"/>
        <end position="470"/>
    </location>
</feature>
<feature type="domain" description="Cadherin 5" evidence="3">
    <location>
        <begin position="470"/>
        <end position="581"/>
    </location>
</feature>
<feature type="glycosylation site" description="N-linked (GlcNAc...) asparagine" evidence="2">
    <location>
        <position position="57"/>
    </location>
</feature>
<feature type="glycosylation site" description="N-linked (GlcNAc...) asparagine" evidence="2">
    <location>
        <position position="74"/>
    </location>
</feature>
<feature type="glycosylation site" description="N-linked (GlcNAc...) asparagine" evidence="2">
    <location>
        <position position="419"/>
    </location>
</feature>
<feature type="glycosylation site" description="N-linked (GlcNAc...) asparagine" evidence="2">
    <location>
        <position position="437"/>
    </location>
</feature>
<feature type="glycosylation site" description="N-linked (GlcNAc...) asparagine" evidence="2">
    <location>
        <position position="508"/>
    </location>
</feature>
<feature type="glycosylation site" description="N-linked (GlcNAc...) asparagine" evidence="2">
    <location>
        <position position="515"/>
    </location>
</feature>
<feature type="glycosylation site" description="N-linked (GlcNAc...) asparagine" evidence="2">
    <location>
        <position position="516"/>
    </location>
</feature>
<feature type="glycosylation site" description="N-linked (GlcNAc...) asparagine" evidence="2">
    <location>
        <position position="534"/>
    </location>
</feature>
<feature type="splice variant" id="VSP_047020" description="In isoform 2." evidence="4">
    <original>VIQT</original>
    <variation>GLFF</variation>
    <location>
        <begin position="487"/>
        <end position="490"/>
    </location>
</feature>
<feature type="splice variant" id="VSP_047021" description="In isoform 2." evidence="4">
    <location>
        <begin position="491"/>
        <end position="772"/>
    </location>
</feature>
<feature type="sequence conflict" description="In Ref. 3; BAG64917." evidence="5" ref="3">
    <original>I</original>
    <variation>V</variation>
    <location>
        <position position="141"/>
    </location>
</feature>
<sequence length="772" mass="87002">MNCYLLLRFMLGIPLLWPCLGATENSQTKKVKQPVRSHLRVKRGWVWNQFFVPEEMNTTSHHIGQLRSDLDNGNNSFQYKLLGAGAGSTFIIDERTGDIYAIQKLDREERSLYILRAQVIDIATGRAVEPESEFVIKVSDINDNEPKFLDEPYEAIVPEMSPEGTLVIQVTASDADDPSSGNNARLLYSLLQGQPYFSVEPTTGVIRISSKMDRELQDEYWVIIQAKDMIGQPGALSGTTSVLIKLSDVNDNKPIFKESLYRLTVSESAPTGTSIGTIMAYDNDIGENAEMDYSIEEDDSQTFDIITNHETQEGIVILKKKVDFEHQNHYGIRAKVKNHHVPEQLMKYHTEASTTFIKIQVEDVDEPPLFLLPYYVFEVFEETPQGSFVGVVSATDPDNRKSPIRYSITRSKVFNINDNGTITTSNSLDREISAWYNLSITATEKYNIEQISSIPLYVQVLNINDHAPEFSQYYETYVCENAGSGQVIQTISAVDRDESIEEHHFYFNLSVEDTNNSSFTIIDNQDNTAVILTNRTGFNLQEEPVFYISILIADNGIPSLTSTNTLTIHVCDCGDSGSTQTCQYQELVLSMGFKTEVIIAILICIMIIFGFIFLTLGLKQRRKQILFPEKSEDFRENIFQYDDEGGGEEDTEAFDIAELRSSTIMRERKTRKTTSAEIRSLYRQSLQVGPDSAIFRKFILEKLEEANTDPCAPPFDSLQTYAFEGTGSLAGSLSSLESAVSDQDESYDYLNELGPRFKRLACMFGSAVQSNN</sequence>
<protein>
    <recommendedName>
        <fullName>Cadherin-19</fullName>
    </recommendedName>
</protein>
<name>CAD19_HUMAN</name>
<proteinExistence type="evidence at protein level"/>
<dbReference type="EMBL" id="AJ007607">
    <property type="protein sequence ID" value="CAC13126.1"/>
    <property type="molecule type" value="mRNA"/>
</dbReference>
<dbReference type="EMBL" id="AY358654">
    <property type="protein sequence ID" value="AAQ89017.1"/>
    <property type="molecule type" value="mRNA"/>
</dbReference>
<dbReference type="EMBL" id="AK304000">
    <property type="protein sequence ID" value="BAG64917.1"/>
    <property type="molecule type" value="mRNA"/>
</dbReference>
<dbReference type="EMBL" id="AC090393">
    <property type="status" value="NOT_ANNOTATED_CDS"/>
    <property type="molecule type" value="Genomic_DNA"/>
</dbReference>
<dbReference type="EMBL" id="AC091643">
    <property type="status" value="NOT_ANNOTATED_CDS"/>
    <property type="molecule type" value="Genomic_DNA"/>
</dbReference>
<dbReference type="CCDS" id="CCDS11994.1">
    <molecule id="Q9H159-1"/>
</dbReference>
<dbReference type="CCDS" id="CCDS59325.1">
    <molecule id="Q9H159-2"/>
</dbReference>
<dbReference type="RefSeq" id="NP_001257957.1">
    <molecule id="Q9H159-2"/>
    <property type="nucleotide sequence ID" value="NM_001271028.2"/>
</dbReference>
<dbReference type="RefSeq" id="NP_066976.1">
    <molecule id="Q9H159-1"/>
    <property type="nucleotide sequence ID" value="NM_021153.4"/>
</dbReference>
<dbReference type="RefSeq" id="XP_047293440.1">
    <molecule id="Q9H159-1"/>
    <property type="nucleotide sequence ID" value="XM_047437484.1"/>
</dbReference>
<dbReference type="RefSeq" id="XP_054174515.1">
    <molecule id="Q9H159-1"/>
    <property type="nucleotide sequence ID" value="XM_054318540.1"/>
</dbReference>
<dbReference type="SMR" id="Q9H159"/>
<dbReference type="BioGRID" id="118390">
    <property type="interactions" value="32"/>
</dbReference>
<dbReference type="FunCoup" id="Q9H159">
    <property type="interactions" value="34"/>
</dbReference>
<dbReference type="IntAct" id="Q9H159">
    <property type="interactions" value="21"/>
</dbReference>
<dbReference type="STRING" id="9606.ENSP00000262150"/>
<dbReference type="GlyCosmos" id="Q9H159">
    <property type="glycosylation" value="8 sites, No reported glycans"/>
</dbReference>
<dbReference type="GlyGen" id="Q9H159">
    <property type="glycosylation" value="9 sites"/>
</dbReference>
<dbReference type="iPTMnet" id="Q9H159"/>
<dbReference type="PhosphoSitePlus" id="Q9H159"/>
<dbReference type="BioMuta" id="CDH19"/>
<dbReference type="DMDM" id="17366818"/>
<dbReference type="jPOST" id="Q9H159"/>
<dbReference type="MassIVE" id="Q9H159"/>
<dbReference type="PaxDb" id="9606-ENSP00000262150"/>
<dbReference type="PeptideAtlas" id="Q9H159"/>
<dbReference type="ProteomicsDB" id="25678"/>
<dbReference type="ProteomicsDB" id="80359">
    <molecule id="Q9H159-1"/>
</dbReference>
<dbReference type="Antibodypedia" id="23185">
    <property type="antibodies" value="194 antibodies from 24 providers"/>
</dbReference>
<dbReference type="DNASU" id="28513"/>
<dbReference type="Ensembl" id="ENST00000262150.7">
    <molecule id="Q9H159-1"/>
    <property type="protein sequence ID" value="ENSP00000262150.2"/>
    <property type="gene ID" value="ENSG00000071991.9"/>
</dbReference>
<dbReference type="Ensembl" id="ENST00000540086.5">
    <molecule id="Q9H159-2"/>
    <property type="protein sequence ID" value="ENSP00000439593.1"/>
    <property type="gene ID" value="ENSG00000071991.9"/>
</dbReference>
<dbReference type="GeneID" id="28513"/>
<dbReference type="KEGG" id="hsa:28513"/>
<dbReference type="MANE-Select" id="ENST00000262150.7">
    <property type="protein sequence ID" value="ENSP00000262150.2"/>
    <property type="RefSeq nucleotide sequence ID" value="NM_021153.4"/>
    <property type="RefSeq protein sequence ID" value="NP_066976.1"/>
</dbReference>
<dbReference type="UCSC" id="uc002lkc.3">
    <molecule id="Q9H159-1"/>
    <property type="organism name" value="human"/>
</dbReference>
<dbReference type="AGR" id="HGNC:1758"/>
<dbReference type="CTD" id="28513"/>
<dbReference type="DisGeNET" id="28513"/>
<dbReference type="GeneCards" id="CDH19"/>
<dbReference type="HGNC" id="HGNC:1758">
    <property type="gene designation" value="CDH19"/>
</dbReference>
<dbReference type="HPA" id="ENSG00000071991">
    <property type="expression patterns" value="Group enriched (heart muscle, intestine)"/>
</dbReference>
<dbReference type="MIM" id="603016">
    <property type="type" value="gene"/>
</dbReference>
<dbReference type="neXtProt" id="NX_Q9H159"/>
<dbReference type="OpenTargets" id="ENSG00000071991"/>
<dbReference type="PharmGKB" id="PA26292"/>
<dbReference type="VEuPathDB" id="HostDB:ENSG00000071991"/>
<dbReference type="eggNOG" id="KOG3594">
    <property type="taxonomic scope" value="Eukaryota"/>
</dbReference>
<dbReference type="GeneTree" id="ENSGT00940000160137"/>
<dbReference type="HOGENOM" id="CLU_005284_3_1_1"/>
<dbReference type="InParanoid" id="Q9H159"/>
<dbReference type="OMA" id="NAAMDYF"/>
<dbReference type="OrthoDB" id="6252479at2759"/>
<dbReference type="PAN-GO" id="Q9H159">
    <property type="GO annotations" value="9 GO annotations based on evolutionary models"/>
</dbReference>
<dbReference type="PhylomeDB" id="Q9H159"/>
<dbReference type="TreeFam" id="TF329887"/>
<dbReference type="PathwayCommons" id="Q9H159"/>
<dbReference type="Reactome" id="R-HSA-9764302">
    <property type="pathway name" value="Regulation of CDH19 Expression and Function"/>
</dbReference>
<dbReference type="SignaLink" id="Q9H159"/>
<dbReference type="SIGNOR" id="Q9H159"/>
<dbReference type="BioGRID-ORCS" id="28513">
    <property type="hits" value="5 hits in 1147 CRISPR screens"/>
</dbReference>
<dbReference type="ChiTaRS" id="CDH19">
    <property type="organism name" value="human"/>
</dbReference>
<dbReference type="GenomeRNAi" id="28513"/>
<dbReference type="Pharos" id="Q9H159">
    <property type="development level" value="Tbio"/>
</dbReference>
<dbReference type="PRO" id="PR:Q9H159"/>
<dbReference type="Proteomes" id="UP000005640">
    <property type="component" value="Chromosome 18"/>
</dbReference>
<dbReference type="RNAct" id="Q9H159">
    <property type="molecule type" value="protein"/>
</dbReference>
<dbReference type="Bgee" id="ENSG00000071991">
    <property type="expression patterns" value="Expressed in trigeminal ganglion and 174 other cell types or tissues"/>
</dbReference>
<dbReference type="ExpressionAtlas" id="Q9H159">
    <property type="expression patterns" value="baseline and differential"/>
</dbReference>
<dbReference type="GO" id="GO:0005912">
    <property type="term" value="C:adherens junction"/>
    <property type="evidence" value="ECO:0000318"/>
    <property type="project" value="GO_Central"/>
</dbReference>
<dbReference type="GO" id="GO:0016342">
    <property type="term" value="C:catenin complex"/>
    <property type="evidence" value="ECO:0000318"/>
    <property type="project" value="GO_Central"/>
</dbReference>
<dbReference type="GO" id="GO:0005886">
    <property type="term" value="C:plasma membrane"/>
    <property type="evidence" value="ECO:0000304"/>
    <property type="project" value="Reactome"/>
</dbReference>
<dbReference type="GO" id="GO:0008013">
    <property type="term" value="F:beta-catenin binding"/>
    <property type="evidence" value="ECO:0000318"/>
    <property type="project" value="GO_Central"/>
</dbReference>
<dbReference type="GO" id="GO:0045296">
    <property type="term" value="F:cadherin binding"/>
    <property type="evidence" value="ECO:0000318"/>
    <property type="project" value="GO_Central"/>
</dbReference>
<dbReference type="GO" id="GO:0005509">
    <property type="term" value="F:calcium ion binding"/>
    <property type="evidence" value="ECO:0007669"/>
    <property type="project" value="InterPro"/>
</dbReference>
<dbReference type="GO" id="GO:0034332">
    <property type="term" value="P:adherens junction organization"/>
    <property type="evidence" value="ECO:0000318"/>
    <property type="project" value="GO_Central"/>
</dbReference>
<dbReference type="GO" id="GO:0016339">
    <property type="term" value="P:calcium-dependent cell-cell adhesion via plasma membrane cell adhesion molecules"/>
    <property type="evidence" value="ECO:0000318"/>
    <property type="project" value="GO_Central"/>
</dbReference>
<dbReference type="GO" id="GO:0016477">
    <property type="term" value="P:cell migration"/>
    <property type="evidence" value="ECO:0000318"/>
    <property type="project" value="GO_Central"/>
</dbReference>
<dbReference type="GO" id="GO:0000902">
    <property type="term" value="P:cell morphogenesis"/>
    <property type="evidence" value="ECO:0000318"/>
    <property type="project" value="GO_Central"/>
</dbReference>
<dbReference type="GO" id="GO:0044331">
    <property type="term" value="P:cell-cell adhesion mediated by cadherin"/>
    <property type="evidence" value="ECO:0000318"/>
    <property type="project" value="GO_Central"/>
</dbReference>
<dbReference type="GO" id="GO:0007043">
    <property type="term" value="P:cell-cell junction assembly"/>
    <property type="evidence" value="ECO:0000318"/>
    <property type="project" value="GO_Central"/>
</dbReference>
<dbReference type="GO" id="GO:0007156">
    <property type="term" value="P:homophilic cell adhesion via plasma membrane adhesion molecules"/>
    <property type="evidence" value="ECO:0007669"/>
    <property type="project" value="InterPro"/>
</dbReference>
<dbReference type="CDD" id="cd11304">
    <property type="entry name" value="Cadherin_repeat"/>
    <property type="match status" value="5"/>
</dbReference>
<dbReference type="FunFam" id="4.10.900.10:FF:000001">
    <property type="entry name" value="Cadherin 2"/>
    <property type="match status" value="1"/>
</dbReference>
<dbReference type="FunFam" id="2.60.40.60:FF:000008">
    <property type="entry name" value="Cadherin 24"/>
    <property type="match status" value="1"/>
</dbReference>
<dbReference type="FunFam" id="2.60.40.60:FF:000009">
    <property type="entry name" value="Cadherin 24"/>
    <property type="match status" value="1"/>
</dbReference>
<dbReference type="FunFam" id="2.60.40.60:FF:000012">
    <property type="entry name" value="Cadherin 24"/>
    <property type="match status" value="1"/>
</dbReference>
<dbReference type="FunFam" id="2.60.40.60:FF:000017">
    <property type="entry name" value="Cadherin 24"/>
    <property type="match status" value="1"/>
</dbReference>
<dbReference type="FunFam" id="2.60.40.60:FF:000014">
    <property type="entry name" value="Cadherin 8"/>
    <property type="match status" value="1"/>
</dbReference>
<dbReference type="Gene3D" id="2.60.40.60">
    <property type="entry name" value="Cadherins"/>
    <property type="match status" value="5"/>
</dbReference>
<dbReference type="Gene3D" id="4.10.900.10">
    <property type="entry name" value="TCF3-CBD (Catenin binding domain)"/>
    <property type="match status" value="1"/>
</dbReference>
<dbReference type="InterPro" id="IPR039808">
    <property type="entry name" value="Cadherin"/>
</dbReference>
<dbReference type="InterPro" id="IPR002126">
    <property type="entry name" value="Cadherin-like_dom"/>
</dbReference>
<dbReference type="InterPro" id="IPR015919">
    <property type="entry name" value="Cadherin-like_sf"/>
</dbReference>
<dbReference type="InterPro" id="IPR020894">
    <property type="entry name" value="Cadherin_CS"/>
</dbReference>
<dbReference type="InterPro" id="IPR000233">
    <property type="entry name" value="Cadherin_Y-type_LIR"/>
</dbReference>
<dbReference type="InterPro" id="IPR027397">
    <property type="entry name" value="Catenin-bd_sf"/>
</dbReference>
<dbReference type="PANTHER" id="PTHR24027:SF323">
    <property type="entry name" value="CADHERIN-19"/>
    <property type="match status" value="1"/>
</dbReference>
<dbReference type="PANTHER" id="PTHR24027">
    <property type="entry name" value="CADHERIN-23"/>
    <property type="match status" value="1"/>
</dbReference>
<dbReference type="Pfam" id="PF01049">
    <property type="entry name" value="CADH_Y-type_LIR"/>
    <property type="match status" value="1"/>
</dbReference>
<dbReference type="Pfam" id="PF00028">
    <property type="entry name" value="Cadherin"/>
    <property type="match status" value="5"/>
</dbReference>
<dbReference type="PRINTS" id="PR00205">
    <property type="entry name" value="CADHERIN"/>
</dbReference>
<dbReference type="SMART" id="SM00112">
    <property type="entry name" value="CA"/>
    <property type="match status" value="5"/>
</dbReference>
<dbReference type="SUPFAM" id="SSF49313">
    <property type="entry name" value="Cadherin-like"/>
    <property type="match status" value="5"/>
</dbReference>
<dbReference type="PROSITE" id="PS00232">
    <property type="entry name" value="CADHERIN_1"/>
    <property type="match status" value="2"/>
</dbReference>
<dbReference type="PROSITE" id="PS50268">
    <property type="entry name" value="CADHERIN_2"/>
    <property type="match status" value="5"/>
</dbReference>
<evidence type="ECO:0000250" key="1"/>
<evidence type="ECO:0000255" key="2"/>
<evidence type="ECO:0000255" key="3">
    <source>
        <dbReference type="PROSITE-ProRule" id="PRU00043"/>
    </source>
</evidence>
<evidence type="ECO:0000303" key="4">
    <source>
    </source>
</evidence>
<evidence type="ECO:0000305" key="5"/>
<accession>Q9H159</accession>
<accession>B4E1V5</accession>
<accession>F5H1K0</accession>